<sequence>MNVKIESSWQQRLQEEFDKPYFEKLVNFVKNEYGKAHILPPGHQIFHVFNSCPFQNVKVVILGQDPYPNPGQYYGICFSVPDGVAIPGSLSNIFKEIHQDLGKPLPNSGNLDRWVKQGVFPMNSVLTVRAHETGSHRNIGWETFTDAVIKKLSEERENLVFMLWGSYAKEKASLIDTDKHLILTAVHPSPRSADYGFFGCKHFSKANTFLRSRGIEEIDW</sequence>
<comment type="function">
    <text evidence="1">Excises uracil residues from the DNA which can arise as a result of misincorporation of dUMP residues by DNA polymerase or due to deamination of cytosine.</text>
</comment>
<comment type="catalytic activity">
    <reaction evidence="1">
        <text>Hydrolyzes single-stranded DNA or mismatched double-stranded DNA and polynucleotides, releasing free uracil.</text>
        <dbReference type="EC" id="3.2.2.27"/>
    </reaction>
</comment>
<comment type="subcellular location">
    <subcellularLocation>
        <location evidence="1">Cytoplasm</location>
    </subcellularLocation>
</comment>
<comment type="similarity">
    <text evidence="1">Belongs to the uracil-DNA glycosylase (UDG) superfamily. UNG family.</text>
</comment>
<feature type="chain" id="PRO_0000176059" description="Uracil-DNA glycosylase 1">
    <location>
        <begin position="1"/>
        <end position="220"/>
    </location>
</feature>
<feature type="active site" description="Proton acceptor" evidence="1">
    <location>
        <position position="65"/>
    </location>
</feature>
<dbReference type="EC" id="3.2.2.27" evidence="1"/>
<dbReference type="EMBL" id="CR626927">
    <property type="protein sequence ID" value="CAH09007.1"/>
    <property type="molecule type" value="Genomic_DNA"/>
</dbReference>
<dbReference type="SMR" id="Q5LA67"/>
<dbReference type="PaxDb" id="272559-BF9343_3226"/>
<dbReference type="KEGG" id="bfs:BF9343_3226"/>
<dbReference type="eggNOG" id="COG0692">
    <property type="taxonomic scope" value="Bacteria"/>
</dbReference>
<dbReference type="HOGENOM" id="CLU_032162_3_0_10"/>
<dbReference type="Proteomes" id="UP000006731">
    <property type="component" value="Chromosome"/>
</dbReference>
<dbReference type="GO" id="GO:0005737">
    <property type="term" value="C:cytoplasm"/>
    <property type="evidence" value="ECO:0007669"/>
    <property type="project" value="UniProtKB-SubCell"/>
</dbReference>
<dbReference type="GO" id="GO:0004844">
    <property type="term" value="F:uracil DNA N-glycosylase activity"/>
    <property type="evidence" value="ECO:0007669"/>
    <property type="project" value="UniProtKB-UniRule"/>
</dbReference>
<dbReference type="GO" id="GO:0097510">
    <property type="term" value="P:base-excision repair, AP site formation via deaminated base removal"/>
    <property type="evidence" value="ECO:0007669"/>
    <property type="project" value="TreeGrafter"/>
</dbReference>
<dbReference type="CDD" id="cd10027">
    <property type="entry name" value="UDG-F1-like"/>
    <property type="match status" value="1"/>
</dbReference>
<dbReference type="FunFam" id="3.40.470.10:FF:000001">
    <property type="entry name" value="Uracil-DNA glycosylase"/>
    <property type="match status" value="1"/>
</dbReference>
<dbReference type="Gene3D" id="3.40.470.10">
    <property type="entry name" value="Uracil-DNA glycosylase-like domain"/>
    <property type="match status" value="1"/>
</dbReference>
<dbReference type="HAMAP" id="MF_00148">
    <property type="entry name" value="UDG"/>
    <property type="match status" value="1"/>
</dbReference>
<dbReference type="InterPro" id="IPR002043">
    <property type="entry name" value="UDG_fam1"/>
</dbReference>
<dbReference type="InterPro" id="IPR018085">
    <property type="entry name" value="Ura-DNA_Glyclase_AS"/>
</dbReference>
<dbReference type="InterPro" id="IPR005122">
    <property type="entry name" value="Uracil-DNA_glycosylase-like"/>
</dbReference>
<dbReference type="InterPro" id="IPR036895">
    <property type="entry name" value="Uracil-DNA_glycosylase-like_sf"/>
</dbReference>
<dbReference type="NCBIfam" id="NF003588">
    <property type="entry name" value="PRK05254.1-1"/>
    <property type="match status" value="1"/>
</dbReference>
<dbReference type="NCBIfam" id="NF003589">
    <property type="entry name" value="PRK05254.1-2"/>
    <property type="match status" value="1"/>
</dbReference>
<dbReference type="NCBIfam" id="NF003591">
    <property type="entry name" value="PRK05254.1-4"/>
    <property type="match status" value="1"/>
</dbReference>
<dbReference type="NCBIfam" id="NF003592">
    <property type="entry name" value="PRK05254.1-5"/>
    <property type="match status" value="1"/>
</dbReference>
<dbReference type="NCBIfam" id="TIGR00628">
    <property type="entry name" value="ung"/>
    <property type="match status" value="1"/>
</dbReference>
<dbReference type="PANTHER" id="PTHR11264">
    <property type="entry name" value="URACIL-DNA GLYCOSYLASE"/>
    <property type="match status" value="1"/>
</dbReference>
<dbReference type="PANTHER" id="PTHR11264:SF0">
    <property type="entry name" value="URACIL-DNA GLYCOSYLASE"/>
    <property type="match status" value="1"/>
</dbReference>
<dbReference type="Pfam" id="PF03167">
    <property type="entry name" value="UDG"/>
    <property type="match status" value="1"/>
</dbReference>
<dbReference type="SMART" id="SM00986">
    <property type="entry name" value="UDG"/>
    <property type="match status" value="1"/>
</dbReference>
<dbReference type="SMART" id="SM00987">
    <property type="entry name" value="UreE_C"/>
    <property type="match status" value="1"/>
</dbReference>
<dbReference type="SUPFAM" id="SSF52141">
    <property type="entry name" value="Uracil-DNA glycosylase-like"/>
    <property type="match status" value="1"/>
</dbReference>
<dbReference type="PROSITE" id="PS00130">
    <property type="entry name" value="U_DNA_GLYCOSYLASE"/>
    <property type="match status" value="1"/>
</dbReference>
<reference key="1">
    <citation type="journal article" date="2005" name="Science">
        <title>Extensive DNA inversions in the B. fragilis genome control variable gene expression.</title>
        <authorList>
            <person name="Cerdeno-Tarraga A.-M."/>
            <person name="Patrick S."/>
            <person name="Crossman L.C."/>
            <person name="Blakely G."/>
            <person name="Abratt V."/>
            <person name="Lennard N."/>
            <person name="Poxton I."/>
            <person name="Duerden B."/>
            <person name="Harris B."/>
            <person name="Quail M.A."/>
            <person name="Barron A."/>
            <person name="Clark L."/>
            <person name="Corton C."/>
            <person name="Doggett J."/>
            <person name="Holden M.T.G."/>
            <person name="Larke N."/>
            <person name="Line A."/>
            <person name="Lord A."/>
            <person name="Norbertczak H."/>
            <person name="Ormond D."/>
            <person name="Price C."/>
            <person name="Rabbinowitsch E."/>
            <person name="Woodward J."/>
            <person name="Barrell B.G."/>
            <person name="Parkhill J."/>
        </authorList>
    </citation>
    <scope>NUCLEOTIDE SEQUENCE [LARGE SCALE GENOMIC DNA]</scope>
    <source>
        <strain>ATCC 25285 / DSM 2151 / CCUG 4856 / JCM 11019 / LMG 10263 / NCTC 9343 / Onslow / VPI 2553 / EN-2</strain>
    </source>
</reference>
<organism>
    <name type="scientific">Bacteroides fragilis (strain ATCC 25285 / DSM 2151 / CCUG 4856 / JCM 11019 / LMG 10263 / NCTC 9343 / Onslow / VPI 2553 / EN-2)</name>
    <dbReference type="NCBI Taxonomy" id="272559"/>
    <lineage>
        <taxon>Bacteria</taxon>
        <taxon>Pseudomonadati</taxon>
        <taxon>Bacteroidota</taxon>
        <taxon>Bacteroidia</taxon>
        <taxon>Bacteroidales</taxon>
        <taxon>Bacteroidaceae</taxon>
        <taxon>Bacteroides</taxon>
    </lineage>
</organism>
<proteinExistence type="inferred from homology"/>
<accession>Q5LA67</accession>
<name>UNG1_BACFN</name>
<protein>
    <recommendedName>
        <fullName evidence="1">Uracil-DNA glycosylase 1</fullName>
        <shortName evidence="1">UDG 1</shortName>
        <ecNumber evidence="1">3.2.2.27</ecNumber>
    </recommendedName>
</protein>
<gene>
    <name evidence="1" type="primary">ung1</name>
    <name type="ordered locus">BF3312</name>
</gene>
<keyword id="KW-0963">Cytoplasm</keyword>
<keyword id="KW-0227">DNA damage</keyword>
<keyword id="KW-0234">DNA repair</keyword>
<keyword id="KW-0378">Hydrolase</keyword>
<evidence type="ECO:0000255" key="1">
    <source>
        <dbReference type="HAMAP-Rule" id="MF_00148"/>
    </source>
</evidence>